<protein>
    <recommendedName>
        <fullName>SKP1-like protein 20</fullName>
        <shortName>AtSK20</shortName>
    </recommendedName>
</protein>
<proteinExistence type="evidence at transcript level"/>
<evidence type="ECO:0000250" key="1"/>
<evidence type="ECO:0000256" key="2">
    <source>
        <dbReference type="SAM" id="MobiDB-lite"/>
    </source>
</evidence>
<evidence type="ECO:0000269" key="3">
    <source>
    </source>
</evidence>
<evidence type="ECO:0000303" key="4">
    <source>
    </source>
</evidence>
<evidence type="ECO:0000305" key="5"/>
<organism>
    <name type="scientific">Arabidopsis thaliana</name>
    <name type="common">Mouse-ear cress</name>
    <dbReference type="NCBI Taxonomy" id="3702"/>
    <lineage>
        <taxon>Eukaryota</taxon>
        <taxon>Viridiplantae</taxon>
        <taxon>Streptophyta</taxon>
        <taxon>Embryophyta</taxon>
        <taxon>Tracheophyta</taxon>
        <taxon>Spermatophyta</taxon>
        <taxon>Magnoliopsida</taxon>
        <taxon>eudicotyledons</taxon>
        <taxon>Gunneridae</taxon>
        <taxon>Pentapetalae</taxon>
        <taxon>rosids</taxon>
        <taxon>malvids</taxon>
        <taxon>Brassicales</taxon>
        <taxon>Brassicaceae</taxon>
        <taxon>Camelineae</taxon>
        <taxon>Arabidopsis</taxon>
    </lineage>
</organism>
<dbReference type="EMBL" id="AC004665">
    <property type="protein sequence ID" value="AAC28530.2"/>
    <property type="molecule type" value="Genomic_DNA"/>
</dbReference>
<dbReference type="EMBL" id="CP002685">
    <property type="protein sequence ID" value="AEC10620.1"/>
    <property type="molecule type" value="Genomic_DNA"/>
</dbReference>
<dbReference type="EMBL" id="CP002685">
    <property type="protein sequence ID" value="AEC10621.1"/>
    <property type="molecule type" value="Genomic_DNA"/>
</dbReference>
<dbReference type="EMBL" id="CP002685">
    <property type="protein sequence ID" value="ANM63251.1"/>
    <property type="molecule type" value="Genomic_DNA"/>
</dbReference>
<dbReference type="EMBL" id="CP002685">
    <property type="protein sequence ID" value="ANM63252.1"/>
    <property type="molecule type" value="Genomic_DNA"/>
</dbReference>
<dbReference type="EMBL" id="CP002685">
    <property type="protein sequence ID" value="ANM63253.1"/>
    <property type="molecule type" value="Genomic_DNA"/>
</dbReference>
<dbReference type="EMBL" id="AF370493">
    <property type="protein sequence ID" value="AAK43870.1"/>
    <property type="molecule type" value="mRNA"/>
</dbReference>
<dbReference type="EMBL" id="AY081697">
    <property type="protein sequence ID" value="AAM10259.1"/>
    <property type="molecule type" value="mRNA"/>
</dbReference>
<dbReference type="PIR" id="T02452">
    <property type="entry name" value="T02452"/>
</dbReference>
<dbReference type="RefSeq" id="NP_001078065.1">
    <molecule id="A8MQG7-1"/>
    <property type="nucleotide sequence ID" value="NM_001084596.2"/>
</dbReference>
<dbReference type="RefSeq" id="NP_001325353.1">
    <molecule id="A8MQG7-2"/>
    <property type="nucleotide sequence ID" value="NM_001337164.1"/>
</dbReference>
<dbReference type="RefSeq" id="NP_001325354.1">
    <molecule id="A8MQG7-1"/>
    <property type="nucleotide sequence ID" value="NM_001337165.1"/>
</dbReference>
<dbReference type="RefSeq" id="NP_001325355.1">
    <molecule id="A8MQG7-2"/>
    <property type="nucleotide sequence ID" value="NM_001337163.1"/>
</dbReference>
<dbReference type="RefSeq" id="NP_566058.2">
    <molecule id="A8MQG7-2"/>
    <property type="nucleotide sequence ID" value="NM_130158.4"/>
</dbReference>
<dbReference type="SMR" id="A8MQG7"/>
<dbReference type="BioGRID" id="4539">
    <property type="interactions" value="14"/>
</dbReference>
<dbReference type="ComplexPortal" id="CPX-1447">
    <property type="entry name" value="SCF(COI1) ubiquitin ligase complex, variant CUL1-RBX1A-ASK20"/>
</dbReference>
<dbReference type="ComplexPortal" id="CPX-1468">
    <property type="entry name" value="SCF(COI1) ubiquitin ligase complex, variant CUL1-RBX1B-ASK20"/>
</dbReference>
<dbReference type="ComplexPortal" id="CPX-1490">
    <property type="entry name" value="SCF(COI1) ubiquitin ligase complex, variant CUL2-RBX1A-ASK20"/>
</dbReference>
<dbReference type="ComplexPortal" id="CPX-1513">
    <property type="entry name" value="SCF(COI1) ubiquitin ligase complex, variant CUL2-RBX1B-ASK20"/>
</dbReference>
<dbReference type="ComplexPortal" id="CPX-1533">
    <property type="entry name" value="SCF(TIR1) ubiquitin ligase complex, variant CUL1-RBX1A-ASK20"/>
</dbReference>
<dbReference type="ComplexPortal" id="CPX-1554">
    <property type="entry name" value="SCF(TIR1) ubiquitin ligase complex, variant CUL1-RBX1B-ASK20"/>
</dbReference>
<dbReference type="ComplexPortal" id="CPX-1576">
    <property type="entry name" value="SCF(TIR1) ubiquitin ligase complex, variant CUL2-RBX1A-ASK20"/>
</dbReference>
<dbReference type="ComplexPortal" id="CPX-1597">
    <property type="entry name" value="SCF(TIR1) ubiquitin ligase complex, variant CUL2-RBX1B-ASK20"/>
</dbReference>
<dbReference type="FunCoup" id="A8MQG7">
    <property type="interactions" value="503"/>
</dbReference>
<dbReference type="IntAct" id="A8MQG7">
    <property type="interactions" value="8"/>
</dbReference>
<dbReference type="STRING" id="3702.A8MQG7"/>
<dbReference type="PaxDb" id="3702-AT2G45950.2"/>
<dbReference type="ProteomicsDB" id="246858">
    <molecule id="A8MQG7-1"/>
</dbReference>
<dbReference type="EnsemblPlants" id="AT2G45950.1">
    <molecule id="A8MQG7-2"/>
    <property type="protein sequence ID" value="AT2G45950.1"/>
    <property type="gene ID" value="AT2G45950"/>
</dbReference>
<dbReference type="EnsemblPlants" id="AT2G45950.2">
    <molecule id="A8MQG7-1"/>
    <property type="protein sequence ID" value="AT2G45950.2"/>
    <property type="gene ID" value="AT2G45950"/>
</dbReference>
<dbReference type="EnsemblPlants" id="AT2G45950.3">
    <molecule id="A8MQG7-2"/>
    <property type="protein sequence ID" value="AT2G45950.3"/>
    <property type="gene ID" value="AT2G45950"/>
</dbReference>
<dbReference type="EnsemblPlants" id="AT2G45950.4">
    <molecule id="A8MQG7-2"/>
    <property type="protein sequence ID" value="AT2G45950.4"/>
    <property type="gene ID" value="AT2G45950"/>
</dbReference>
<dbReference type="EnsemblPlants" id="AT2G45950.5">
    <molecule id="A8MQG7-1"/>
    <property type="protein sequence ID" value="AT2G45950.5"/>
    <property type="gene ID" value="AT2G45950"/>
</dbReference>
<dbReference type="GeneID" id="819203"/>
<dbReference type="Gramene" id="AT2G45950.1">
    <molecule id="A8MQG7-2"/>
    <property type="protein sequence ID" value="AT2G45950.1"/>
    <property type="gene ID" value="AT2G45950"/>
</dbReference>
<dbReference type="Gramene" id="AT2G45950.2">
    <molecule id="A8MQG7-1"/>
    <property type="protein sequence ID" value="AT2G45950.2"/>
    <property type="gene ID" value="AT2G45950"/>
</dbReference>
<dbReference type="Gramene" id="AT2G45950.3">
    <molecule id="A8MQG7-2"/>
    <property type="protein sequence ID" value="AT2G45950.3"/>
    <property type="gene ID" value="AT2G45950"/>
</dbReference>
<dbReference type="Gramene" id="AT2G45950.4">
    <molecule id="A8MQG7-2"/>
    <property type="protein sequence ID" value="AT2G45950.4"/>
    <property type="gene ID" value="AT2G45950"/>
</dbReference>
<dbReference type="Gramene" id="AT2G45950.5">
    <molecule id="A8MQG7-1"/>
    <property type="protein sequence ID" value="AT2G45950.5"/>
    <property type="gene ID" value="AT2G45950"/>
</dbReference>
<dbReference type="KEGG" id="ath:AT2G45950"/>
<dbReference type="Araport" id="AT2G45950"/>
<dbReference type="TAIR" id="AT2G45950">
    <property type="gene designation" value="SK20"/>
</dbReference>
<dbReference type="eggNOG" id="KOG1724">
    <property type="taxonomic scope" value="Eukaryota"/>
</dbReference>
<dbReference type="InParanoid" id="A8MQG7"/>
<dbReference type="OMA" id="VMKSFIW"/>
<dbReference type="PhylomeDB" id="A8MQG7"/>
<dbReference type="UniPathway" id="UPA00143"/>
<dbReference type="PRO" id="PR:A8MQG7"/>
<dbReference type="Proteomes" id="UP000006548">
    <property type="component" value="Chromosome 2"/>
</dbReference>
<dbReference type="ExpressionAtlas" id="A8MQG7">
    <property type="expression patterns" value="baseline and differential"/>
</dbReference>
<dbReference type="GO" id="GO:0005634">
    <property type="term" value="C:nucleus"/>
    <property type="evidence" value="ECO:0007669"/>
    <property type="project" value="UniProtKB-SubCell"/>
</dbReference>
<dbReference type="GO" id="GO:0019005">
    <property type="term" value="C:SCF ubiquitin ligase complex"/>
    <property type="evidence" value="ECO:0000250"/>
    <property type="project" value="TAIR"/>
</dbReference>
<dbReference type="GO" id="GO:0009734">
    <property type="term" value="P:auxin-activated signaling pathway"/>
    <property type="evidence" value="ECO:0000303"/>
    <property type="project" value="ComplexPortal"/>
</dbReference>
<dbReference type="GO" id="GO:0009867">
    <property type="term" value="P:jasmonic acid mediated signaling pathway"/>
    <property type="evidence" value="ECO:0000315"/>
    <property type="project" value="ComplexPortal"/>
</dbReference>
<dbReference type="GO" id="GO:0016567">
    <property type="term" value="P:protein ubiquitination"/>
    <property type="evidence" value="ECO:0007669"/>
    <property type="project" value="UniProtKB-UniPathway"/>
</dbReference>
<dbReference type="GO" id="GO:0009733">
    <property type="term" value="P:response to auxin"/>
    <property type="evidence" value="ECO:0000303"/>
    <property type="project" value="ComplexPortal"/>
</dbReference>
<dbReference type="GO" id="GO:0009753">
    <property type="term" value="P:response to jasmonic acid"/>
    <property type="evidence" value="ECO:0000315"/>
    <property type="project" value="ComplexPortal"/>
</dbReference>
<dbReference type="GO" id="GO:0006511">
    <property type="term" value="P:ubiquitin-dependent protein catabolic process"/>
    <property type="evidence" value="ECO:0007669"/>
    <property type="project" value="InterPro"/>
</dbReference>
<dbReference type="FunFam" id="3.30.710.10:FF:000022">
    <property type="entry name" value="SKP1-like protein 21 isoform X1"/>
    <property type="match status" value="1"/>
</dbReference>
<dbReference type="Gene3D" id="3.30.710.10">
    <property type="entry name" value="Potassium Channel Kv1.1, Chain A"/>
    <property type="match status" value="1"/>
</dbReference>
<dbReference type="InterPro" id="IPR016897">
    <property type="entry name" value="SKP1"/>
</dbReference>
<dbReference type="InterPro" id="IPR001232">
    <property type="entry name" value="SKP1-like"/>
</dbReference>
<dbReference type="InterPro" id="IPR036296">
    <property type="entry name" value="SKP1-like_dim_sf"/>
</dbReference>
<dbReference type="InterPro" id="IPR011333">
    <property type="entry name" value="SKP1/BTB/POZ_sf"/>
</dbReference>
<dbReference type="InterPro" id="IPR016072">
    <property type="entry name" value="Skp1_comp_dimer"/>
</dbReference>
<dbReference type="PANTHER" id="PTHR11165">
    <property type="entry name" value="SKP1"/>
    <property type="match status" value="1"/>
</dbReference>
<dbReference type="Pfam" id="PF01466">
    <property type="entry name" value="Skp1"/>
    <property type="match status" value="1"/>
</dbReference>
<dbReference type="SMART" id="SM00512">
    <property type="entry name" value="Skp1"/>
    <property type="match status" value="1"/>
</dbReference>
<dbReference type="SUPFAM" id="SSF54695">
    <property type="entry name" value="POZ domain"/>
    <property type="match status" value="1"/>
</dbReference>
<dbReference type="SUPFAM" id="SSF81382">
    <property type="entry name" value="Skp1 dimerisation domain-like"/>
    <property type="match status" value="1"/>
</dbReference>
<reference key="1">
    <citation type="journal article" date="1999" name="Nature">
        <title>Sequence and analysis of chromosome 2 of the plant Arabidopsis thaliana.</title>
        <authorList>
            <person name="Lin X."/>
            <person name="Kaul S."/>
            <person name="Rounsley S.D."/>
            <person name="Shea T.P."/>
            <person name="Benito M.-I."/>
            <person name="Town C.D."/>
            <person name="Fujii C.Y."/>
            <person name="Mason T.M."/>
            <person name="Bowman C.L."/>
            <person name="Barnstead M.E."/>
            <person name="Feldblyum T.V."/>
            <person name="Buell C.R."/>
            <person name="Ketchum K.A."/>
            <person name="Lee J.J."/>
            <person name="Ronning C.M."/>
            <person name="Koo H.L."/>
            <person name="Moffat K.S."/>
            <person name="Cronin L.A."/>
            <person name="Shen M."/>
            <person name="Pai G."/>
            <person name="Van Aken S."/>
            <person name="Umayam L."/>
            <person name="Tallon L.J."/>
            <person name="Gill J.E."/>
            <person name="Adams M.D."/>
            <person name="Carrera A.J."/>
            <person name="Creasy T.H."/>
            <person name="Goodman H.M."/>
            <person name="Somerville C.R."/>
            <person name="Copenhaver G.P."/>
            <person name="Preuss D."/>
            <person name="Nierman W.C."/>
            <person name="White O."/>
            <person name="Eisen J.A."/>
            <person name="Salzberg S.L."/>
            <person name="Fraser C.M."/>
            <person name="Venter J.C."/>
        </authorList>
    </citation>
    <scope>NUCLEOTIDE SEQUENCE [LARGE SCALE GENOMIC DNA]</scope>
    <source>
        <strain>cv. Columbia</strain>
    </source>
</reference>
<reference key="2">
    <citation type="journal article" date="2017" name="Plant J.">
        <title>Araport11: a complete reannotation of the Arabidopsis thaliana reference genome.</title>
        <authorList>
            <person name="Cheng C.Y."/>
            <person name="Krishnakumar V."/>
            <person name="Chan A.P."/>
            <person name="Thibaud-Nissen F."/>
            <person name="Schobel S."/>
            <person name="Town C.D."/>
        </authorList>
    </citation>
    <scope>GENOME REANNOTATION</scope>
    <source>
        <strain>cv. Columbia</strain>
    </source>
</reference>
<reference key="3">
    <citation type="journal article" date="2003" name="Science">
        <title>Empirical analysis of transcriptional activity in the Arabidopsis genome.</title>
        <authorList>
            <person name="Yamada K."/>
            <person name="Lim J."/>
            <person name="Dale J.M."/>
            <person name="Chen H."/>
            <person name="Shinn P."/>
            <person name="Palm C.J."/>
            <person name="Southwick A.M."/>
            <person name="Wu H.C."/>
            <person name="Kim C.J."/>
            <person name="Nguyen M."/>
            <person name="Pham P.K."/>
            <person name="Cheuk R.F."/>
            <person name="Karlin-Newmann G."/>
            <person name="Liu S.X."/>
            <person name="Lam B."/>
            <person name="Sakano H."/>
            <person name="Wu T."/>
            <person name="Yu G."/>
            <person name="Miranda M."/>
            <person name="Quach H.L."/>
            <person name="Tripp M."/>
            <person name="Chang C.H."/>
            <person name="Lee J.M."/>
            <person name="Toriumi M.J."/>
            <person name="Chan M.M."/>
            <person name="Tang C.C."/>
            <person name="Onodera C.S."/>
            <person name="Deng J.M."/>
            <person name="Akiyama K."/>
            <person name="Ansari Y."/>
            <person name="Arakawa T."/>
            <person name="Banh J."/>
            <person name="Banno F."/>
            <person name="Bowser L."/>
            <person name="Brooks S.Y."/>
            <person name="Carninci P."/>
            <person name="Chao Q."/>
            <person name="Choy N."/>
            <person name="Enju A."/>
            <person name="Goldsmith A.D."/>
            <person name="Gurjal M."/>
            <person name="Hansen N.F."/>
            <person name="Hayashizaki Y."/>
            <person name="Johnson-Hopson C."/>
            <person name="Hsuan V.W."/>
            <person name="Iida K."/>
            <person name="Karnes M."/>
            <person name="Khan S."/>
            <person name="Koesema E."/>
            <person name="Ishida J."/>
            <person name="Jiang P.X."/>
            <person name="Jones T."/>
            <person name="Kawai J."/>
            <person name="Kamiya A."/>
            <person name="Meyers C."/>
            <person name="Nakajima M."/>
            <person name="Narusaka M."/>
            <person name="Seki M."/>
            <person name="Sakurai T."/>
            <person name="Satou M."/>
            <person name="Tamse R."/>
            <person name="Vaysberg M."/>
            <person name="Wallender E.K."/>
            <person name="Wong C."/>
            <person name="Yamamura Y."/>
            <person name="Yuan S."/>
            <person name="Shinozaki K."/>
            <person name="Davis R.W."/>
            <person name="Theologis A."/>
            <person name="Ecker J.R."/>
        </authorList>
    </citation>
    <scope>NUCLEOTIDE SEQUENCE [LARGE SCALE MRNA] (ISOFORM 3)</scope>
    <source>
        <strain>cv. Columbia</strain>
    </source>
</reference>
<reference key="4">
    <citation type="journal article" date="2003" name="Plant Physiol.">
        <title>Members of the Arabidopsis-SKP1-like gene family exhibit a variety of expression patterns and may play diverse roles in Arabidopsis.</title>
        <authorList>
            <person name="Zhao D."/>
            <person name="Ni W."/>
            <person name="Feng B."/>
            <person name="Han T."/>
            <person name="Petrasek M.G."/>
            <person name="Ma H."/>
        </authorList>
    </citation>
    <scope>GENE FAMILY</scope>
    <scope>NOMENCLATURE</scope>
    <scope>TISSUE SPECIFICITY</scope>
</reference>
<name>ASK20_ARATH</name>
<sequence>MSEGDLAVMKPETMKSYIWLQTADGSIQQVEQEVAMFCPMICQEVIQKGVGSSKNHAISLPQRVNPAMFSLILDYCRFHQLPGRSNKERKTYDERFIRMDTKRLCELTSAADSLQLKPLVDLTSRALARIIEGKNPEEIREIFHLPDDLTEEEKLEPLKNSMDDPRIRLLNRLYAKKRKELKERERLKNVEVEEHVDERSVDDLLSFINGRDHKAVKMSKGKKKKKKKKDQKIVSSNNIHDKESHDLRSKQQCVEEIGSSMREVPNLLSAEDDISTPNAGSEDEDIDDEIDPAMRELLDREVEDFAQRLNSNWVRSLGKERRPVHFSINGNGTTRRHTGMVSIWRPCMFTLF</sequence>
<gene>
    <name type="primary">ASK20</name>
    <name type="ordered locus">At2g45950</name>
    <name type="ORF">F4I18.7</name>
</gene>
<accession>A8MQG7</accession>
<accession>B3H4L0</accession>
<accession>O80824</accession>
<accession>Q94K04</accession>
<feature type="chain" id="PRO_0000375261" description="SKP1-like protein 20">
    <location>
        <begin position="1"/>
        <end position="352"/>
    </location>
</feature>
<feature type="region of interest" description="Interaction with the F-box domain of F-box proteins" evidence="1">
    <location>
        <begin position="108"/>
        <end position="167"/>
    </location>
</feature>
<feature type="region of interest" description="Disordered" evidence="2">
    <location>
        <begin position="214"/>
        <end position="251"/>
    </location>
</feature>
<feature type="region of interest" description="Disordered" evidence="2">
    <location>
        <begin position="267"/>
        <end position="288"/>
    </location>
</feature>
<feature type="compositionally biased region" description="Basic residues" evidence="2">
    <location>
        <begin position="216"/>
        <end position="230"/>
    </location>
</feature>
<feature type="compositionally biased region" description="Basic and acidic residues" evidence="2">
    <location>
        <begin position="239"/>
        <end position="249"/>
    </location>
</feature>
<feature type="splice variant" id="VSP_037364" description="In isoform 3." evidence="4">
    <original>DHKAVKMSKGKKKKKKKKDQKIVSSNNIHDKESHDLRSKQQCVEEIGSS</original>
    <variation>GLFGSKENSVSQITRL</variation>
    <location>
        <begin position="212"/>
        <end position="260"/>
    </location>
</feature>
<feature type="splice variant" id="VSP_037365" description="In isoform 3." evidence="4">
    <location>
        <begin position="261"/>
        <end position="352"/>
    </location>
</feature>
<feature type="splice variant" id="VSP_037366" description="In isoform 2." evidence="5">
    <original>MVS</original>
    <variation>QSP</variation>
    <location>
        <begin position="340"/>
        <end position="342"/>
    </location>
</feature>
<feature type="splice variant" id="VSP_037367" description="In isoform 2." evidence="5">
    <location>
        <begin position="343"/>
        <end position="352"/>
    </location>
</feature>
<keyword id="KW-0025">Alternative splicing</keyword>
<keyword id="KW-0539">Nucleus</keyword>
<keyword id="KW-1185">Reference proteome</keyword>
<keyword id="KW-0833">Ubl conjugation pathway</keyword>
<comment type="function">
    <text evidence="1">Involved in ubiquitination and subsequent proteasomal degradation of target proteins. Together with CUL1, RBX1 and a F-box protein, it forms a SCF E3 ubiquitin ligase complex. The functional specificity of this complex depends on the type of F-box protein. In the SCF complex, it serves as an adapter that links the F-box protein to CUL1 (By similarity).</text>
</comment>
<comment type="pathway">
    <text>Protein modification; protein ubiquitination.</text>
</comment>
<comment type="subunit">
    <text evidence="1">Part of a SCF (SKP1-cullin-F-box) protein ligase complex.</text>
</comment>
<comment type="subcellular location">
    <subcellularLocation>
        <location evidence="1">Nucleus</location>
    </subcellularLocation>
</comment>
<comment type="alternative products">
    <event type="alternative splicing"/>
    <isoform>
        <id>A8MQG7-1</id>
        <name>1</name>
        <sequence type="displayed"/>
    </isoform>
    <isoform>
        <id>A8MQG7-2</id>
        <name>2</name>
        <sequence type="described" ref="VSP_037366 VSP_037367"/>
    </isoform>
    <isoform>
        <id>A8MQG7-3</id>
        <name>3</name>
        <sequence type="described" ref="VSP_037364 VSP_037365"/>
    </isoform>
</comment>
<comment type="tissue specificity">
    <text evidence="3">Expressed in young seedlings, roots, leaves, floral stems, inflorescences, and siliques.</text>
</comment>
<comment type="similarity">
    <text evidence="5">Belongs to the SKP1 family.</text>
</comment>